<feature type="chain" id="PRO_0000303686" description="Exodeoxyribonuclease 7 small subunit">
    <location>
        <begin position="1"/>
        <end position="94"/>
    </location>
</feature>
<name>EX7S_TRIV2</name>
<protein>
    <recommendedName>
        <fullName evidence="1">Exodeoxyribonuclease 7 small subunit</fullName>
        <ecNumber evidence="1">3.1.11.6</ecNumber>
    </recommendedName>
    <alternativeName>
        <fullName evidence="1">Exodeoxyribonuclease VII small subunit</fullName>
        <shortName evidence="1">Exonuclease VII small subunit</shortName>
    </alternativeName>
</protein>
<reference key="1">
    <citation type="journal article" date="2014" name="Stand. Genomic Sci.">
        <title>Complete genome sequence of Anabaena variabilis ATCC 29413.</title>
        <authorList>
            <person name="Thiel T."/>
            <person name="Pratte B.S."/>
            <person name="Zhong J."/>
            <person name="Goodwin L."/>
            <person name="Copeland A."/>
            <person name="Lucas S."/>
            <person name="Han C."/>
            <person name="Pitluck S."/>
            <person name="Land M.L."/>
            <person name="Kyrpides N.C."/>
            <person name="Woyke T."/>
        </authorList>
    </citation>
    <scope>NUCLEOTIDE SEQUENCE [LARGE SCALE GENOMIC DNA]</scope>
    <source>
        <strain>ATCC 29413 / PCC 7937</strain>
    </source>
</reference>
<keyword id="KW-0963">Cytoplasm</keyword>
<keyword id="KW-0269">Exonuclease</keyword>
<keyword id="KW-0378">Hydrolase</keyword>
<keyword id="KW-0540">Nuclease</keyword>
<evidence type="ECO:0000255" key="1">
    <source>
        <dbReference type="HAMAP-Rule" id="MF_00337"/>
    </source>
</evidence>
<accession>Q3MGJ7</accession>
<gene>
    <name evidence="1" type="primary">xseB</name>
    <name type="ordered locus">Ava_0263</name>
</gene>
<dbReference type="EC" id="3.1.11.6" evidence="1"/>
<dbReference type="EMBL" id="CP000117">
    <property type="protein sequence ID" value="ABA19889.1"/>
    <property type="molecule type" value="Genomic_DNA"/>
</dbReference>
<dbReference type="SMR" id="Q3MGJ7"/>
<dbReference type="STRING" id="240292.Ava_0263"/>
<dbReference type="KEGG" id="ava:Ava_0263"/>
<dbReference type="eggNOG" id="COG1722">
    <property type="taxonomic scope" value="Bacteria"/>
</dbReference>
<dbReference type="HOGENOM" id="CLU_145918_1_0_3"/>
<dbReference type="Proteomes" id="UP000002533">
    <property type="component" value="Chromosome"/>
</dbReference>
<dbReference type="GO" id="GO:0005829">
    <property type="term" value="C:cytosol"/>
    <property type="evidence" value="ECO:0007669"/>
    <property type="project" value="TreeGrafter"/>
</dbReference>
<dbReference type="GO" id="GO:0009318">
    <property type="term" value="C:exodeoxyribonuclease VII complex"/>
    <property type="evidence" value="ECO:0007669"/>
    <property type="project" value="InterPro"/>
</dbReference>
<dbReference type="GO" id="GO:0008855">
    <property type="term" value="F:exodeoxyribonuclease VII activity"/>
    <property type="evidence" value="ECO:0007669"/>
    <property type="project" value="UniProtKB-UniRule"/>
</dbReference>
<dbReference type="GO" id="GO:0006308">
    <property type="term" value="P:DNA catabolic process"/>
    <property type="evidence" value="ECO:0007669"/>
    <property type="project" value="UniProtKB-UniRule"/>
</dbReference>
<dbReference type="Gene3D" id="1.10.287.1040">
    <property type="entry name" value="Exonuclease VII, small subunit"/>
    <property type="match status" value="1"/>
</dbReference>
<dbReference type="HAMAP" id="MF_00337">
    <property type="entry name" value="Exonuc_7_S"/>
    <property type="match status" value="1"/>
</dbReference>
<dbReference type="InterPro" id="IPR003761">
    <property type="entry name" value="Exonuc_VII_S"/>
</dbReference>
<dbReference type="InterPro" id="IPR037004">
    <property type="entry name" value="Exonuc_VII_ssu_sf"/>
</dbReference>
<dbReference type="NCBIfam" id="TIGR01280">
    <property type="entry name" value="xseB"/>
    <property type="match status" value="1"/>
</dbReference>
<dbReference type="PANTHER" id="PTHR34137">
    <property type="entry name" value="EXODEOXYRIBONUCLEASE 7 SMALL SUBUNIT"/>
    <property type="match status" value="1"/>
</dbReference>
<dbReference type="PANTHER" id="PTHR34137:SF1">
    <property type="entry name" value="EXODEOXYRIBONUCLEASE 7 SMALL SUBUNIT"/>
    <property type="match status" value="1"/>
</dbReference>
<dbReference type="Pfam" id="PF02609">
    <property type="entry name" value="Exonuc_VII_S"/>
    <property type="match status" value="1"/>
</dbReference>
<dbReference type="SUPFAM" id="SSF116842">
    <property type="entry name" value="XseB-like"/>
    <property type="match status" value="1"/>
</dbReference>
<organism>
    <name type="scientific">Trichormus variabilis (strain ATCC 29413 / PCC 7937)</name>
    <name type="common">Anabaena variabilis</name>
    <dbReference type="NCBI Taxonomy" id="240292"/>
    <lineage>
        <taxon>Bacteria</taxon>
        <taxon>Bacillati</taxon>
        <taxon>Cyanobacteriota</taxon>
        <taxon>Cyanophyceae</taxon>
        <taxon>Nostocales</taxon>
        <taxon>Nostocaceae</taxon>
        <taxon>Trichormus</taxon>
    </lineage>
</organism>
<proteinExistence type="inferred from homology"/>
<comment type="function">
    <text evidence="1">Bidirectionally degrades single-stranded DNA into large acid-insoluble oligonucleotides, which are then degraded further into small acid-soluble oligonucleotides.</text>
</comment>
<comment type="catalytic activity">
    <reaction evidence="1">
        <text>Exonucleolytic cleavage in either 5'- to 3'- or 3'- to 5'-direction to yield nucleoside 5'-phosphates.</text>
        <dbReference type="EC" id="3.1.11.6"/>
    </reaction>
</comment>
<comment type="subunit">
    <text evidence="1">Heterooligomer composed of large and small subunits.</text>
</comment>
<comment type="subcellular location">
    <subcellularLocation>
        <location evidence="1">Cytoplasm</location>
    </subcellularLocation>
</comment>
<comment type="similarity">
    <text evidence="1">Belongs to the XseB family.</text>
</comment>
<sequence>MVKRKNSDNSGTVAQGNYEAKVAEIEAIISRIESGELELETVFEQFANAVQYLRQCDTFLQQRQQQIDLLIETLNEQDGDQIPRVSNDGIEPKK</sequence>